<reference key="1">
    <citation type="journal article" date="2008" name="Environ. Microbiol.">
        <title>The genome of Erwinia tasmaniensis strain Et1/99, a non-pathogenic bacterium in the genus Erwinia.</title>
        <authorList>
            <person name="Kube M."/>
            <person name="Migdoll A.M."/>
            <person name="Mueller I."/>
            <person name="Kuhl H."/>
            <person name="Beck A."/>
            <person name="Reinhardt R."/>
            <person name="Geider K."/>
        </authorList>
    </citation>
    <scope>NUCLEOTIDE SEQUENCE [LARGE SCALE GENOMIC DNA]</scope>
    <source>
        <strain>DSM 17950 / CFBP 7177 / CIP 109463 / NCPPB 4357 / Et1/99</strain>
    </source>
</reference>
<protein>
    <recommendedName>
        <fullName evidence="1">dCTP deaminase</fullName>
        <ecNumber evidence="1">3.5.4.13</ecNumber>
    </recommendedName>
    <alternativeName>
        <fullName evidence="1">Deoxycytidine triphosphate deaminase</fullName>
    </alternativeName>
</protein>
<keyword id="KW-0378">Hydrolase</keyword>
<keyword id="KW-0546">Nucleotide metabolism</keyword>
<keyword id="KW-0547">Nucleotide-binding</keyword>
<keyword id="KW-1185">Reference proteome</keyword>
<accession>B2VFR2</accession>
<dbReference type="EC" id="3.5.4.13" evidence="1"/>
<dbReference type="EMBL" id="CU468135">
    <property type="protein sequence ID" value="CAO96364.1"/>
    <property type="molecule type" value="Genomic_DNA"/>
</dbReference>
<dbReference type="RefSeq" id="WP_012441058.1">
    <property type="nucleotide sequence ID" value="NC_010694.1"/>
</dbReference>
<dbReference type="SMR" id="B2VFR2"/>
<dbReference type="STRING" id="465817.ETA_13180"/>
<dbReference type="KEGG" id="eta:ETA_13180"/>
<dbReference type="eggNOG" id="COG0717">
    <property type="taxonomic scope" value="Bacteria"/>
</dbReference>
<dbReference type="HOGENOM" id="CLU_087476_2_0_6"/>
<dbReference type="OrthoDB" id="9780956at2"/>
<dbReference type="UniPathway" id="UPA00610">
    <property type="reaction ID" value="UER00665"/>
</dbReference>
<dbReference type="Proteomes" id="UP000001726">
    <property type="component" value="Chromosome"/>
</dbReference>
<dbReference type="GO" id="GO:0008829">
    <property type="term" value="F:dCTP deaminase activity"/>
    <property type="evidence" value="ECO:0007669"/>
    <property type="project" value="UniProtKB-UniRule"/>
</dbReference>
<dbReference type="GO" id="GO:0000166">
    <property type="term" value="F:nucleotide binding"/>
    <property type="evidence" value="ECO:0007669"/>
    <property type="project" value="UniProtKB-KW"/>
</dbReference>
<dbReference type="GO" id="GO:0006226">
    <property type="term" value="P:dUMP biosynthetic process"/>
    <property type="evidence" value="ECO:0007669"/>
    <property type="project" value="UniProtKB-UniPathway"/>
</dbReference>
<dbReference type="GO" id="GO:0006229">
    <property type="term" value="P:dUTP biosynthetic process"/>
    <property type="evidence" value="ECO:0007669"/>
    <property type="project" value="UniProtKB-UniRule"/>
</dbReference>
<dbReference type="GO" id="GO:0015949">
    <property type="term" value="P:nucleobase-containing small molecule interconversion"/>
    <property type="evidence" value="ECO:0007669"/>
    <property type="project" value="TreeGrafter"/>
</dbReference>
<dbReference type="CDD" id="cd07557">
    <property type="entry name" value="trimeric_dUTPase"/>
    <property type="match status" value="1"/>
</dbReference>
<dbReference type="FunFam" id="2.70.40.10:FF:000003">
    <property type="entry name" value="dCTP deaminase"/>
    <property type="match status" value="1"/>
</dbReference>
<dbReference type="Gene3D" id="2.70.40.10">
    <property type="match status" value="1"/>
</dbReference>
<dbReference type="HAMAP" id="MF_00146">
    <property type="entry name" value="dCTP_deaminase"/>
    <property type="match status" value="1"/>
</dbReference>
<dbReference type="InterPro" id="IPR011962">
    <property type="entry name" value="dCTP_deaminase"/>
</dbReference>
<dbReference type="InterPro" id="IPR036157">
    <property type="entry name" value="dUTPase-like_sf"/>
</dbReference>
<dbReference type="InterPro" id="IPR033704">
    <property type="entry name" value="dUTPase_trimeric"/>
</dbReference>
<dbReference type="NCBIfam" id="TIGR02274">
    <property type="entry name" value="dCTP_deam"/>
    <property type="match status" value="1"/>
</dbReference>
<dbReference type="PANTHER" id="PTHR42680">
    <property type="entry name" value="DCTP DEAMINASE"/>
    <property type="match status" value="1"/>
</dbReference>
<dbReference type="PANTHER" id="PTHR42680:SF3">
    <property type="entry name" value="DCTP DEAMINASE"/>
    <property type="match status" value="1"/>
</dbReference>
<dbReference type="Pfam" id="PF22769">
    <property type="entry name" value="DCD"/>
    <property type="match status" value="1"/>
</dbReference>
<dbReference type="SUPFAM" id="SSF51283">
    <property type="entry name" value="dUTPase-like"/>
    <property type="match status" value="1"/>
</dbReference>
<gene>
    <name evidence="1" type="primary">dcd</name>
    <name type="ordered locus">ETA_13180</name>
</gene>
<feature type="chain" id="PRO_1000096425" description="dCTP deaminase">
    <location>
        <begin position="1"/>
        <end position="193"/>
    </location>
</feature>
<feature type="region of interest" description="Disordered" evidence="2">
    <location>
        <begin position="169"/>
        <end position="193"/>
    </location>
</feature>
<feature type="active site" description="Proton donor/acceptor" evidence="1">
    <location>
        <position position="138"/>
    </location>
</feature>
<feature type="binding site" evidence="1">
    <location>
        <begin position="110"/>
        <end position="115"/>
    </location>
    <ligand>
        <name>dCTP</name>
        <dbReference type="ChEBI" id="CHEBI:61481"/>
    </ligand>
</feature>
<feature type="binding site" evidence="1">
    <location>
        <position position="128"/>
    </location>
    <ligand>
        <name>dCTP</name>
        <dbReference type="ChEBI" id="CHEBI:61481"/>
    </ligand>
</feature>
<feature type="binding site" evidence="1">
    <location>
        <begin position="136"/>
        <end position="138"/>
    </location>
    <ligand>
        <name>dCTP</name>
        <dbReference type="ChEBI" id="CHEBI:61481"/>
    </ligand>
</feature>
<feature type="binding site" evidence="1">
    <location>
        <position position="171"/>
    </location>
    <ligand>
        <name>dCTP</name>
        <dbReference type="ChEBI" id="CHEBI:61481"/>
    </ligand>
</feature>
<feature type="binding site" evidence="1">
    <location>
        <position position="178"/>
    </location>
    <ligand>
        <name>dCTP</name>
        <dbReference type="ChEBI" id="CHEBI:61481"/>
    </ligand>
</feature>
<feature type="binding site" evidence="1">
    <location>
        <position position="182"/>
    </location>
    <ligand>
        <name>dCTP</name>
        <dbReference type="ChEBI" id="CHEBI:61481"/>
    </ligand>
</feature>
<proteinExistence type="inferred from homology"/>
<comment type="function">
    <text evidence="1">Catalyzes the deamination of dCTP to dUTP.</text>
</comment>
<comment type="catalytic activity">
    <reaction evidence="1">
        <text>dCTP + H2O + H(+) = dUTP + NH4(+)</text>
        <dbReference type="Rhea" id="RHEA:22680"/>
        <dbReference type="ChEBI" id="CHEBI:15377"/>
        <dbReference type="ChEBI" id="CHEBI:15378"/>
        <dbReference type="ChEBI" id="CHEBI:28938"/>
        <dbReference type="ChEBI" id="CHEBI:61481"/>
        <dbReference type="ChEBI" id="CHEBI:61555"/>
        <dbReference type="EC" id="3.5.4.13"/>
    </reaction>
</comment>
<comment type="pathway">
    <text evidence="1">Pyrimidine metabolism; dUMP biosynthesis; dUMP from dCTP (dUTP route): step 1/2.</text>
</comment>
<comment type="subunit">
    <text evidence="1">Homotrimer.</text>
</comment>
<comment type="similarity">
    <text evidence="1">Belongs to the dCTP deaminase family.</text>
</comment>
<sequence length="193" mass="21040">MRLCDRDIEAWLDNGKLGIDPRPPVERINGATVDVRLGNQFRTFRGHTAAFIDLSGPKAEVSAALDRVMSDEIVLPEGDAFFLHPGELALAVTLESVTLPDDLVGWLDGRSSLARLGLMVHVTAHRIDPGWQGRIVLEFYNSGKLPLALRPGMLIGALSFEPLSGPAARPYNSRQDAKYKGQQGAVASRIDKD</sequence>
<name>DCD_ERWT9</name>
<organism>
    <name type="scientific">Erwinia tasmaniensis (strain DSM 17950 / CFBP 7177 / CIP 109463 / NCPPB 4357 / Et1/99)</name>
    <dbReference type="NCBI Taxonomy" id="465817"/>
    <lineage>
        <taxon>Bacteria</taxon>
        <taxon>Pseudomonadati</taxon>
        <taxon>Pseudomonadota</taxon>
        <taxon>Gammaproteobacteria</taxon>
        <taxon>Enterobacterales</taxon>
        <taxon>Erwiniaceae</taxon>
        <taxon>Erwinia</taxon>
    </lineage>
</organism>
<evidence type="ECO:0000255" key="1">
    <source>
        <dbReference type="HAMAP-Rule" id="MF_00146"/>
    </source>
</evidence>
<evidence type="ECO:0000256" key="2">
    <source>
        <dbReference type="SAM" id="MobiDB-lite"/>
    </source>
</evidence>